<keyword id="KW-0025">Alternative splicing</keyword>
<keyword id="KW-1015">Disulfide bond</keyword>
<keyword id="KW-1032">Host cell membrane</keyword>
<keyword id="KW-1043">Host membrane</keyword>
<keyword id="KW-0945">Host-virus interaction</keyword>
<keyword id="KW-0375">Hydrogen ion transport</keyword>
<keyword id="KW-1083">Inhibition of host autophagy by virus</keyword>
<keyword id="KW-0407">Ion channel</keyword>
<keyword id="KW-0406">Ion transport</keyword>
<keyword id="KW-0449">Lipoprotein</keyword>
<keyword id="KW-0472">Membrane</keyword>
<keyword id="KW-0564">Palmitate</keyword>
<keyword id="KW-0597">Phosphoprotein</keyword>
<keyword id="KW-0735">Signal-anchor</keyword>
<keyword id="KW-0812">Transmembrane</keyword>
<keyword id="KW-1133">Transmembrane helix</keyword>
<keyword id="KW-0813">Transport</keyword>
<keyword id="KW-1182">Viral ion channel</keyword>
<keyword id="KW-0946">Virion</keyword>
<gene>
    <name evidence="1" type="primary">M</name>
</gene>
<sequence>MSLLTEVETHTRNEWECRCSDSSDPLVVAANIIGILHLILWILDRLFFKCIYRRLKYGLKRGPATAGVPESMREEYRQEQQSAVDVDDGHFVNIELE</sequence>
<name>M2_I03A0</name>
<accession>P0C5T5</accession>
<organism>
    <name type="scientific">Influenza A virus (strain A/Hong Kong/212/2003 H5N1 genotype Z+)</name>
    <dbReference type="NCBI Taxonomy" id="279794"/>
    <lineage>
        <taxon>Viruses</taxon>
        <taxon>Riboviria</taxon>
        <taxon>Orthornavirae</taxon>
        <taxon>Negarnaviricota</taxon>
        <taxon>Polyploviricotina</taxon>
        <taxon>Insthoviricetes</taxon>
        <taxon>Articulavirales</taxon>
        <taxon>Orthomyxoviridae</taxon>
        <taxon>Alphainfluenzavirus</taxon>
        <taxon>Alphainfluenzavirus influenzae</taxon>
        <taxon>Influenza A virus</taxon>
    </lineage>
</organism>
<organismHost>
    <name type="scientific">Aves</name>
    <dbReference type="NCBI Taxonomy" id="8782"/>
</organismHost>
<organismHost>
    <name type="scientific">Felis catus</name>
    <name type="common">Cat</name>
    <name type="synonym">Felis silvestris catus</name>
    <dbReference type="NCBI Taxonomy" id="9685"/>
</organismHost>
<organismHost>
    <name type="scientific">Homo sapiens</name>
    <name type="common">Human</name>
    <dbReference type="NCBI Taxonomy" id="9606"/>
</organismHost>
<organismHost>
    <name type="scientific">Panthera pardus</name>
    <name type="common">Leopard</name>
    <name type="synonym">Felis pardus</name>
    <dbReference type="NCBI Taxonomy" id="9691"/>
</organismHost>
<organismHost>
    <name type="scientific">Panthera tigris</name>
    <name type="common">Tiger</name>
    <dbReference type="NCBI Taxonomy" id="9694"/>
</organismHost>
<organismHost>
    <name type="scientific">Sus scrofa</name>
    <name type="common">Pig</name>
    <dbReference type="NCBI Taxonomy" id="9823"/>
</organismHost>
<feature type="chain" id="PRO_0000311633" description="Matrix protein 2">
    <location>
        <begin position="1"/>
        <end position="97"/>
    </location>
</feature>
<feature type="topological domain" description="Virion surface" evidence="1">
    <location>
        <begin position="1"/>
        <end position="22"/>
    </location>
</feature>
<feature type="transmembrane region" description="Helical; Signal-anchor for type III membrane protein" evidence="1">
    <location>
        <begin position="23"/>
        <end position="43"/>
    </location>
</feature>
<feature type="topological domain" description="Intravirion" evidence="1">
    <location>
        <begin position="44"/>
        <end position="97"/>
    </location>
</feature>
<feature type="site" description="Essential for channel activity, possibly by being protonated during channel activation, and by forming the channel gate and the selective filter" evidence="1">
    <location>
        <position position="37"/>
    </location>
</feature>
<feature type="site" description="Seems to be involved in pH gating" evidence="1">
    <location>
        <position position="41"/>
    </location>
</feature>
<feature type="modified residue" description="Phosphoserine; by host" evidence="1">
    <location>
        <position position="82"/>
    </location>
</feature>
<feature type="lipid moiety-binding region" description="S-palmitoyl cysteine; by host" evidence="1">
    <location>
        <position position="50"/>
    </location>
</feature>
<feature type="disulfide bond" description="Interchain (with C-17)" evidence="1">
    <location>
        <position position="17"/>
    </location>
</feature>
<feature type="disulfide bond" description="Interchain (with C-19)" evidence="1">
    <location>
        <position position="19"/>
    </location>
</feature>
<evidence type="ECO:0000255" key="1">
    <source>
        <dbReference type="HAMAP-Rule" id="MF_04069"/>
    </source>
</evidence>
<protein>
    <recommendedName>
        <fullName evidence="1">Matrix protein 2</fullName>
    </recommendedName>
    <alternativeName>
        <fullName evidence="1">Proton channel protein M2</fullName>
    </alternativeName>
</protein>
<reference key="1">
    <citation type="journal article" date="2004" name="Proc. Natl. Acad. Sci. U.S.A.">
        <title>H5N1 influenza: a protean pandemic threat.</title>
        <authorList>
            <person name="Guan Y."/>
            <person name="Poon L.L.M."/>
            <person name="Cheung C.Y."/>
            <person name="Ellis T.M."/>
            <person name="Lim W."/>
            <person name="Lipatov A.S."/>
            <person name="Chan K.H."/>
            <person name="Sturm-Ramirez K.M."/>
            <person name="Cheung C.L."/>
            <person name="Leung Y.H.C."/>
            <person name="Yuen K.Y."/>
            <person name="Webster R.G."/>
            <person name="Peiris J.S.M."/>
        </authorList>
    </citation>
    <scope>NUCLEOTIDE SEQUENCE [GENOMIC RNA]</scope>
</reference>
<comment type="function">
    <text evidence="1">Forms a proton-selective ion channel that is necessary for the efficient release of the viral genome during virus entry. After attaching to the cell surface, the virion enters the cell by endocytosis. Acidification of the endosome triggers M2 ion channel activity. The influx of protons into virion interior is believed to disrupt interactions between the viral ribonucleoprotein (RNP), matrix protein 1 (M1), and lipid bilayers, thereby freeing the viral genome from interaction with viral proteins and enabling RNA segments to migrate to the host cell nucleus, where influenza virus RNA transcription and replication occur. Also plays a role in viral proteins secretory pathway. Elevates the intravesicular pH of normally acidic compartments, such as trans-Golgi network, preventing newly formed hemagglutinin from premature switching to the fusion-active conformation.</text>
</comment>
<comment type="activity regulation">
    <text>The M2 protein from most influenza A strains is inhibited by amantadine and rimantadine, resulting in viral uncoating incapacity. Emergence of amantadine-resistant variants is usually rapid.</text>
</comment>
<comment type="subunit">
    <text evidence="1">Homotetramer; composed of two disulfide-linked dimers held together by non-covalent interactions. May interact with matrix protein 1.</text>
</comment>
<comment type="subcellular location">
    <subcellularLocation>
        <location evidence="1">Virion membrane</location>
    </subcellularLocation>
    <subcellularLocation>
        <location evidence="1">Host apical cell membrane</location>
        <topology evidence="1">Single-pass type III membrane protein</topology>
    </subcellularLocation>
    <text evidence="1">Abundantly expressed at the apical plasma membrane in infected polarized epithelial cells, in close proximity to budding and assembled virions. Minor component of virions (only 16-20 molecules/virion).</text>
</comment>
<comment type="alternative products">
    <event type="alternative splicing"/>
    <isoform>
        <id>P0C5T5-1</id>
        <name>M2</name>
        <sequence type="displayed"/>
    </isoform>
    <isoform>
        <id>Q6J8D2-1</id>
        <name>M1</name>
        <sequence type="external"/>
    </isoform>
    <text>Only the first 9 residues are shared by the 2 isoforms.</text>
</comment>
<comment type="domain">
    <text evidence="1">Cytoplasmic tail plays an important role in virion assembly and morphogenesis.</text>
</comment>
<comment type="miscellaneous">
    <text evidence="1">When the channel is activated, one or more imidazole moieties of His-37 probably become bi-protonated.</text>
</comment>
<comment type="similarity">
    <text evidence="1">Belongs to the influenza viruses matrix protein M2 family.</text>
</comment>
<proteinExistence type="inferred from homology"/>
<dbReference type="EMBL" id="AY575893">
    <property type="status" value="NOT_ANNOTATED_CDS"/>
    <property type="molecule type" value="Genomic_DNA"/>
</dbReference>
<dbReference type="SMR" id="P0C5T5"/>
<dbReference type="GO" id="GO:0020002">
    <property type="term" value="C:host cell plasma membrane"/>
    <property type="evidence" value="ECO:0007669"/>
    <property type="project" value="UniProtKB-SubCell"/>
</dbReference>
<dbReference type="GO" id="GO:0016020">
    <property type="term" value="C:membrane"/>
    <property type="evidence" value="ECO:0007669"/>
    <property type="project" value="UniProtKB-UniRule"/>
</dbReference>
<dbReference type="GO" id="GO:0055036">
    <property type="term" value="C:virion membrane"/>
    <property type="evidence" value="ECO:0007669"/>
    <property type="project" value="UniProtKB-SubCell"/>
</dbReference>
<dbReference type="GO" id="GO:0005216">
    <property type="term" value="F:monoatomic ion channel activity"/>
    <property type="evidence" value="ECO:0007669"/>
    <property type="project" value="UniProtKB-UniRule"/>
</dbReference>
<dbReference type="GO" id="GO:0015078">
    <property type="term" value="F:proton transmembrane transporter activity"/>
    <property type="evidence" value="ECO:0007669"/>
    <property type="project" value="UniProtKB-UniRule"/>
</dbReference>
<dbReference type="GO" id="GO:0051259">
    <property type="term" value="P:protein complex oligomerization"/>
    <property type="evidence" value="ECO:0007669"/>
    <property type="project" value="UniProtKB-UniRule"/>
</dbReference>
<dbReference type="GO" id="GO:0044694">
    <property type="term" value="P:symbiont genome entry into host cell via pore formation in plasma membrane"/>
    <property type="evidence" value="ECO:0007669"/>
    <property type="project" value="UniProtKB-UniRule"/>
</dbReference>
<dbReference type="GO" id="GO:0140321">
    <property type="term" value="P:symbiont-mediated suppression of host autophagy"/>
    <property type="evidence" value="ECO:0007669"/>
    <property type="project" value="UniProtKB-KW"/>
</dbReference>
<dbReference type="Gene3D" id="6.10.250.1640">
    <property type="match status" value="1"/>
</dbReference>
<dbReference type="HAMAP" id="MF_04069">
    <property type="entry name" value="INFV_M2"/>
    <property type="match status" value="1"/>
</dbReference>
<dbReference type="InterPro" id="IPR002089">
    <property type="entry name" value="Flu_M2"/>
</dbReference>
<dbReference type="Pfam" id="PF00599">
    <property type="entry name" value="Flu_M2"/>
    <property type="match status" value="1"/>
</dbReference>